<feature type="chain" id="PRO_0000276541" description="Cytochrome b6-f complex subunit 4">
    <location>
        <begin position="1"/>
        <end position="160"/>
    </location>
</feature>
<feature type="transmembrane region" description="Helical" evidence="2">
    <location>
        <begin position="36"/>
        <end position="56"/>
    </location>
</feature>
<feature type="transmembrane region" description="Helical" evidence="2">
    <location>
        <begin position="95"/>
        <end position="115"/>
    </location>
</feature>
<feature type="transmembrane region" description="Helical" evidence="2">
    <location>
        <begin position="131"/>
        <end position="151"/>
    </location>
</feature>
<protein>
    <recommendedName>
        <fullName evidence="2">Cytochrome b6-f complex subunit 4</fullName>
    </recommendedName>
    <alternativeName>
        <fullName evidence="2">17 kDa polypeptide</fullName>
    </alternativeName>
</protein>
<dbReference type="EMBL" id="DQ226511">
    <property type="protein sequence ID" value="ABB20988.1"/>
    <property type="molecule type" value="Genomic_DNA"/>
</dbReference>
<dbReference type="RefSeq" id="YP_762292.1">
    <property type="nucleotide sequence ID" value="NC_008359.1"/>
</dbReference>
<dbReference type="SMR" id="Q09WY6"/>
<dbReference type="GeneID" id="4290628"/>
<dbReference type="GO" id="GO:0009535">
    <property type="term" value="C:chloroplast thylakoid membrane"/>
    <property type="evidence" value="ECO:0007669"/>
    <property type="project" value="UniProtKB-SubCell"/>
</dbReference>
<dbReference type="GO" id="GO:0045158">
    <property type="term" value="F:electron transporter, transferring electrons within cytochrome b6/f complex of photosystem II activity"/>
    <property type="evidence" value="ECO:0007669"/>
    <property type="project" value="UniProtKB-UniRule"/>
</dbReference>
<dbReference type="GO" id="GO:0045156">
    <property type="term" value="F:electron transporter, transferring electrons within the cyclic electron transport pathway of photosynthesis activity"/>
    <property type="evidence" value="ECO:0007669"/>
    <property type="project" value="InterPro"/>
</dbReference>
<dbReference type="GO" id="GO:0016491">
    <property type="term" value="F:oxidoreductase activity"/>
    <property type="evidence" value="ECO:0007669"/>
    <property type="project" value="InterPro"/>
</dbReference>
<dbReference type="GO" id="GO:0009767">
    <property type="term" value="P:photosynthetic electron transport chain"/>
    <property type="evidence" value="ECO:0007669"/>
    <property type="project" value="InterPro"/>
</dbReference>
<dbReference type="CDD" id="cd00290">
    <property type="entry name" value="cytochrome_b_C"/>
    <property type="match status" value="1"/>
</dbReference>
<dbReference type="FunFam" id="1.10.287.980:FF:000001">
    <property type="entry name" value="Cytochrome b6-f complex subunit 4"/>
    <property type="match status" value="1"/>
</dbReference>
<dbReference type="FunFam" id="1.20.5.510:FF:000002">
    <property type="entry name" value="Cytochrome b6-f complex subunit 4"/>
    <property type="match status" value="1"/>
</dbReference>
<dbReference type="Gene3D" id="1.10.287.980">
    <property type="entry name" value="plastocyanin oxidoreductase"/>
    <property type="match status" value="1"/>
</dbReference>
<dbReference type="Gene3D" id="1.20.5.510">
    <property type="entry name" value="Single helix bin"/>
    <property type="match status" value="1"/>
</dbReference>
<dbReference type="HAMAP" id="MF_01344">
    <property type="entry name" value="Cytb6_f_subIV"/>
    <property type="match status" value="1"/>
</dbReference>
<dbReference type="InterPro" id="IPR005798">
    <property type="entry name" value="Cyt_b/b6_C"/>
</dbReference>
<dbReference type="InterPro" id="IPR036150">
    <property type="entry name" value="Cyt_b/b6_C_sf"/>
</dbReference>
<dbReference type="InterPro" id="IPR005870">
    <property type="entry name" value="Cyt_b6/f_cplx_suIV"/>
</dbReference>
<dbReference type="InterPro" id="IPR048260">
    <property type="entry name" value="Cytochrome_b_C_euk/bac"/>
</dbReference>
<dbReference type="NCBIfam" id="TIGR01156">
    <property type="entry name" value="cytb6_f_IV"/>
    <property type="match status" value="1"/>
</dbReference>
<dbReference type="PANTHER" id="PTHR19271">
    <property type="entry name" value="CYTOCHROME B"/>
    <property type="match status" value="1"/>
</dbReference>
<dbReference type="PANTHER" id="PTHR19271:SF16">
    <property type="entry name" value="CYTOCHROME B"/>
    <property type="match status" value="1"/>
</dbReference>
<dbReference type="Pfam" id="PF00032">
    <property type="entry name" value="Cytochrom_B_C"/>
    <property type="match status" value="1"/>
</dbReference>
<dbReference type="PIRSF" id="PIRSF000033">
    <property type="entry name" value="B6f_17K"/>
    <property type="match status" value="1"/>
</dbReference>
<dbReference type="SUPFAM" id="SSF81648">
    <property type="entry name" value="a domain/subunit of cytochrome bc1 complex (Ubiquinol-cytochrome c reductase)"/>
    <property type="match status" value="1"/>
</dbReference>
<dbReference type="PROSITE" id="PS51003">
    <property type="entry name" value="CYTB_CTER"/>
    <property type="match status" value="1"/>
</dbReference>
<evidence type="ECO:0000250" key="1"/>
<evidence type="ECO:0000255" key="2">
    <source>
        <dbReference type="HAMAP-Rule" id="MF_01344"/>
    </source>
</evidence>
<proteinExistence type="inferred from homology"/>
<keyword id="KW-0150">Chloroplast</keyword>
<keyword id="KW-0249">Electron transport</keyword>
<keyword id="KW-0472">Membrane</keyword>
<keyword id="KW-0602">Photosynthesis</keyword>
<keyword id="KW-0934">Plastid</keyword>
<keyword id="KW-0793">Thylakoid</keyword>
<keyword id="KW-0812">Transmembrane</keyword>
<keyword id="KW-1133">Transmembrane helix</keyword>
<keyword id="KW-0813">Transport</keyword>
<geneLocation type="chloroplast"/>
<name>PETD_MORIN</name>
<sequence>MGVTKKPDLNDPVLRAKLAKGMGHNYYGEPAWPNDLLYIFPVVILGTIACNVGLAVLEPSMIGEPADPFATPLEILPEWYFFPVFQILRTVPNKLLGVLLMVSVPAGLLTVPFLENVNKFQNPFRRPVATTVFLIGTAVALWLGIGATLPIDKSLTLGLF</sequence>
<organism>
    <name type="scientific">Morus indica</name>
    <name type="common">Mulberry</name>
    <dbReference type="NCBI Taxonomy" id="248361"/>
    <lineage>
        <taxon>Eukaryota</taxon>
        <taxon>Viridiplantae</taxon>
        <taxon>Streptophyta</taxon>
        <taxon>Embryophyta</taxon>
        <taxon>Tracheophyta</taxon>
        <taxon>Spermatophyta</taxon>
        <taxon>Magnoliopsida</taxon>
        <taxon>eudicotyledons</taxon>
        <taxon>Gunneridae</taxon>
        <taxon>Pentapetalae</taxon>
        <taxon>rosids</taxon>
        <taxon>fabids</taxon>
        <taxon>Rosales</taxon>
        <taxon>Moraceae</taxon>
        <taxon>Moreae</taxon>
        <taxon>Morus</taxon>
    </lineage>
</organism>
<comment type="function">
    <text evidence="2">Component of the cytochrome b6-f complex, which mediates electron transfer between photosystem II (PSII) and photosystem I (PSI), cyclic electron flow around PSI, and state transitions.</text>
</comment>
<comment type="subunit">
    <text evidence="1">The 4 large subunits of the cytochrome b6-f complex are cytochrome b6, subunit IV (17 kDa polypeptide, petD), cytochrome f and the Rieske protein, while the 4 small subunits are petG, petL, petM and petN. The complex functions as a dimer (By similarity).</text>
</comment>
<comment type="subcellular location">
    <subcellularLocation>
        <location evidence="2">Plastid</location>
        <location evidence="2">Chloroplast thylakoid membrane</location>
        <topology evidence="2">Multi-pass membrane protein</topology>
    </subcellularLocation>
</comment>
<comment type="similarity">
    <text evidence="2">Belongs to the cytochrome b family. PetD subfamily.</text>
</comment>
<reference key="1">
    <citation type="submission" date="2005-09" db="EMBL/GenBank/DDBJ databases">
        <title>The chloroplast genome of mulberry: structural features and comparative analysis.</title>
        <authorList>
            <person name="Ravi V."/>
            <person name="Khurana J.P."/>
            <person name="Tyagi A.K."/>
            <person name="Khurana P."/>
        </authorList>
    </citation>
    <scope>NUCLEOTIDE SEQUENCE [LARGE SCALE GENOMIC DNA]</scope>
    <source>
        <strain>cv. K2</strain>
    </source>
</reference>
<accession>Q09WY6</accession>
<gene>
    <name evidence="2" type="primary">petD</name>
    <name type="ordered locus">MoinCp052</name>
</gene>